<protein>
    <recommendedName>
        <fullName evidence="1">Exodeoxyribonuclease 7 large subunit</fullName>
        <ecNumber evidence="1">3.1.11.6</ecNumber>
    </recommendedName>
    <alternativeName>
        <fullName evidence="1">Exodeoxyribonuclease VII large subunit</fullName>
        <shortName evidence="1">Exonuclease VII large subunit</shortName>
    </alternativeName>
</protein>
<organism>
    <name type="scientific">Yersinia enterocolitica serotype O:8 / biotype 1B (strain NCTC 13174 / 8081)</name>
    <dbReference type="NCBI Taxonomy" id="393305"/>
    <lineage>
        <taxon>Bacteria</taxon>
        <taxon>Pseudomonadati</taxon>
        <taxon>Pseudomonadota</taxon>
        <taxon>Gammaproteobacteria</taxon>
        <taxon>Enterobacterales</taxon>
        <taxon>Yersiniaceae</taxon>
        <taxon>Yersinia</taxon>
    </lineage>
</organism>
<feature type="chain" id="PRO_0000303834" description="Exodeoxyribonuclease 7 large subunit">
    <location>
        <begin position="1"/>
        <end position="458"/>
    </location>
</feature>
<reference key="1">
    <citation type="journal article" date="2006" name="PLoS Genet.">
        <title>The complete genome sequence and comparative genome analysis of the high pathogenicity Yersinia enterocolitica strain 8081.</title>
        <authorList>
            <person name="Thomson N.R."/>
            <person name="Howard S."/>
            <person name="Wren B.W."/>
            <person name="Holden M.T.G."/>
            <person name="Crossman L."/>
            <person name="Challis G.L."/>
            <person name="Churcher C."/>
            <person name="Mungall K."/>
            <person name="Brooks K."/>
            <person name="Chillingworth T."/>
            <person name="Feltwell T."/>
            <person name="Abdellah Z."/>
            <person name="Hauser H."/>
            <person name="Jagels K."/>
            <person name="Maddison M."/>
            <person name="Moule S."/>
            <person name="Sanders M."/>
            <person name="Whitehead S."/>
            <person name="Quail M.A."/>
            <person name="Dougan G."/>
            <person name="Parkhill J."/>
            <person name="Prentice M.B."/>
        </authorList>
    </citation>
    <scope>NUCLEOTIDE SEQUENCE [LARGE SCALE GENOMIC DNA]</scope>
    <source>
        <strain>NCTC 13174 / 8081</strain>
    </source>
</reference>
<evidence type="ECO:0000255" key="1">
    <source>
        <dbReference type="HAMAP-Rule" id="MF_00378"/>
    </source>
</evidence>
<gene>
    <name evidence="1" type="primary">xseA</name>
    <name type="ordered locus">YE1080</name>
</gene>
<dbReference type="EC" id="3.1.11.6" evidence="1"/>
<dbReference type="EMBL" id="AM286415">
    <property type="protein sequence ID" value="CAL11177.1"/>
    <property type="molecule type" value="Genomic_DNA"/>
</dbReference>
<dbReference type="RefSeq" id="WP_011815788.1">
    <property type="nucleotide sequence ID" value="NC_008800.1"/>
</dbReference>
<dbReference type="RefSeq" id="YP_001005412.1">
    <property type="nucleotide sequence ID" value="NC_008800.1"/>
</dbReference>
<dbReference type="SMR" id="A1JKT0"/>
<dbReference type="KEGG" id="yen:YE1080"/>
<dbReference type="PATRIC" id="fig|393305.7.peg.1178"/>
<dbReference type="eggNOG" id="COG1570">
    <property type="taxonomic scope" value="Bacteria"/>
</dbReference>
<dbReference type="HOGENOM" id="CLU_023625_3_1_6"/>
<dbReference type="OrthoDB" id="9802795at2"/>
<dbReference type="Proteomes" id="UP000000642">
    <property type="component" value="Chromosome"/>
</dbReference>
<dbReference type="GO" id="GO:0005737">
    <property type="term" value="C:cytoplasm"/>
    <property type="evidence" value="ECO:0007669"/>
    <property type="project" value="UniProtKB-SubCell"/>
</dbReference>
<dbReference type="GO" id="GO:0009318">
    <property type="term" value="C:exodeoxyribonuclease VII complex"/>
    <property type="evidence" value="ECO:0007669"/>
    <property type="project" value="InterPro"/>
</dbReference>
<dbReference type="GO" id="GO:0008855">
    <property type="term" value="F:exodeoxyribonuclease VII activity"/>
    <property type="evidence" value="ECO:0007669"/>
    <property type="project" value="UniProtKB-UniRule"/>
</dbReference>
<dbReference type="GO" id="GO:0003676">
    <property type="term" value="F:nucleic acid binding"/>
    <property type="evidence" value="ECO:0007669"/>
    <property type="project" value="InterPro"/>
</dbReference>
<dbReference type="GO" id="GO:0006308">
    <property type="term" value="P:DNA catabolic process"/>
    <property type="evidence" value="ECO:0007669"/>
    <property type="project" value="UniProtKB-UniRule"/>
</dbReference>
<dbReference type="CDD" id="cd04489">
    <property type="entry name" value="ExoVII_LU_OBF"/>
    <property type="match status" value="1"/>
</dbReference>
<dbReference type="HAMAP" id="MF_00378">
    <property type="entry name" value="Exonuc_7_L"/>
    <property type="match status" value="1"/>
</dbReference>
<dbReference type="InterPro" id="IPR003753">
    <property type="entry name" value="Exonuc_VII_L"/>
</dbReference>
<dbReference type="InterPro" id="IPR020579">
    <property type="entry name" value="Exonuc_VII_lsu_C"/>
</dbReference>
<dbReference type="InterPro" id="IPR025824">
    <property type="entry name" value="OB-fold_nuc-bd_dom"/>
</dbReference>
<dbReference type="NCBIfam" id="TIGR00237">
    <property type="entry name" value="xseA"/>
    <property type="match status" value="1"/>
</dbReference>
<dbReference type="PANTHER" id="PTHR30008">
    <property type="entry name" value="EXODEOXYRIBONUCLEASE 7 LARGE SUBUNIT"/>
    <property type="match status" value="1"/>
</dbReference>
<dbReference type="PANTHER" id="PTHR30008:SF0">
    <property type="entry name" value="EXODEOXYRIBONUCLEASE 7 LARGE SUBUNIT"/>
    <property type="match status" value="1"/>
</dbReference>
<dbReference type="Pfam" id="PF02601">
    <property type="entry name" value="Exonuc_VII_L"/>
    <property type="match status" value="1"/>
</dbReference>
<dbReference type="Pfam" id="PF13742">
    <property type="entry name" value="tRNA_anti_2"/>
    <property type="match status" value="1"/>
</dbReference>
<sequence>MSQSSASSIFTVSRLNQTVRQLLEMEMGQIWLTAEISNFSQPSSGHWYFTLKDDRAQVRCAMFRNTNRRTTFRPQNGQQVLVRASITLYEPRGDYQLIAESMQPAGDGLLQQQFEQLKQQLAAEGLFDQSHKQPLPSPAKQVGVITSSSGAALHDVLQVLQRRDPSLPVIIYPTAVQGADAPLQIVRAIQLANLRGECDVLIVGRGGGSLEDLWSFNDERVARAIFNSRIPIVSAVGHETDVTIADFVADLRAPTPSAAAELVSRNQIELVRQIQGQQQRMEMAMDYYLAQRHQQLTRLEHRLQQQHPHLRLARQQTLLLKLQRRLEDSAQNQIRRLSRRTERLQQRLVQAQPQGQIHRYNQRVQQQEYRLRQALERQLNGYRQRFGIACSQLEAVSPLATLARGYSVTQTPEGSLLKTTKQVHTGDKLTTRLQDGWVESEITQIKVAKKPRQRKAAN</sequence>
<proteinExistence type="inferred from homology"/>
<accession>A1JKT0</accession>
<keyword id="KW-0963">Cytoplasm</keyword>
<keyword id="KW-0269">Exonuclease</keyword>
<keyword id="KW-0378">Hydrolase</keyword>
<keyword id="KW-0540">Nuclease</keyword>
<name>EX7L_YERE8</name>
<comment type="function">
    <text evidence="1">Bidirectionally degrades single-stranded DNA into large acid-insoluble oligonucleotides, which are then degraded further into small acid-soluble oligonucleotides.</text>
</comment>
<comment type="catalytic activity">
    <reaction evidence="1">
        <text>Exonucleolytic cleavage in either 5'- to 3'- or 3'- to 5'-direction to yield nucleoside 5'-phosphates.</text>
        <dbReference type="EC" id="3.1.11.6"/>
    </reaction>
</comment>
<comment type="subunit">
    <text evidence="1">Heterooligomer composed of large and small subunits.</text>
</comment>
<comment type="subcellular location">
    <subcellularLocation>
        <location evidence="1">Cytoplasm</location>
    </subcellularLocation>
</comment>
<comment type="similarity">
    <text evidence="1">Belongs to the XseA family.</text>
</comment>